<gene>
    <name evidence="1" type="primary">CYBA</name>
</gene>
<proteinExistence type="evidence at transcript level"/>
<keyword id="KW-1003">Cell membrane</keyword>
<keyword id="KW-0249">Electron transport</keyword>
<keyword id="KW-0349">Heme</keyword>
<keyword id="KW-0408">Iron</keyword>
<keyword id="KW-1017">Isopeptide bond</keyword>
<keyword id="KW-0472">Membrane</keyword>
<keyword id="KW-0479">Metal-binding</keyword>
<keyword id="KW-0521">NADP</keyword>
<keyword id="KW-0560">Oxidoreductase</keyword>
<keyword id="KW-0597">Phosphoprotein</keyword>
<keyword id="KW-0812">Transmembrane</keyword>
<keyword id="KW-1133">Transmembrane helix</keyword>
<keyword id="KW-0813">Transport</keyword>
<keyword id="KW-0832">Ubl conjugation</keyword>
<evidence type="ECO:0000250" key="1">
    <source>
        <dbReference type="UniProtKB" id="P13498"/>
    </source>
</evidence>
<evidence type="ECO:0000250" key="2">
    <source>
        <dbReference type="UniProtKB" id="Q61462"/>
    </source>
</evidence>
<evidence type="ECO:0000256" key="3">
    <source>
        <dbReference type="SAM" id="MobiDB-lite"/>
    </source>
</evidence>
<evidence type="ECO:0000305" key="4"/>
<reference key="1">
    <citation type="journal article" date="2002" name="Comp. Biochem. Physiol.">
        <title>Molecular analysis of the bison phagocyte NADPH oxidase: cloning and sequencing of five NADPH oxidase cDNAs.</title>
        <authorList>
            <person name="Gauss K.A."/>
            <person name="Bunger P.L."/>
            <person name="Siemsen D.W."/>
            <person name="Young C.J."/>
            <person name="Nelson-Overton L."/>
            <person name="Prigge J.R."/>
            <person name="Swain S.D."/>
            <person name="Quinn M.T."/>
        </authorList>
    </citation>
    <scope>NUCLEOTIDE SEQUENCE [MRNA]</scope>
</reference>
<name>CY24A_BISBI</name>
<sequence length="191" mass="20512">MGQIEWAMWANEQALASGLILITGGIVATAGQFTQWYLGAYSIAAGVLVCLLEYPRGKRSKGSTMERCGQKYLTRVVKLFGPLTRNYYIRAFLHLGLAVPAGFLLATILGTACLAIASGIYLLAAIRGEQWSPIEPKPKERPQIGGTIKQPPSNPPPRPPAEARKKLSEEAAGVPTGGPQENPMPVNDEVV</sequence>
<accession>Q95L73</accession>
<organism>
    <name type="scientific">Bison bison</name>
    <name type="common">American bison</name>
    <name type="synonym">Bos bison</name>
    <dbReference type="NCBI Taxonomy" id="9901"/>
    <lineage>
        <taxon>Eukaryota</taxon>
        <taxon>Metazoa</taxon>
        <taxon>Chordata</taxon>
        <taxon>Craniata</taxon>
        <taxon>Vertebrata</taxon>
        <taxon>Euteleostomi</taxon>
        <taxon>Mammalia</taxon>
        <taxon>Eutheria</taxon>
        <taxon>Laurasiatheria</taxon>
        <taxon>Artiodactyla</taxon>
        <taxon>Ruminantia</taxon>
        <taxon>Pecora</taxon>
        <taxon>Bovidae</taxon>
        <taxon>Bovinae</taxon>
        <taxon>Bison</taxon>
    </lineage>
</organism>
<feature type="initiator methionine" description="Removed" evidence="1">
    <location>
        <position position="1"/>
    </location>
</feature>
<feature type="chain" id="PRO_0000144905" description="Cytochrome b-245 light chain">
    <location>
        <begin position="2"/>
        <end position="191"/>
    </location>
</feature>
<feature type="topological domain" description="Cytoplasmic" evidence="4">
    <location>
        <begin position="2"/>
        <end position="7"/>
    </location>
</feature>
<feature type="transmembrane region" description="Helical" evidence="1">
    <location>
        <begin position="8"/>
        <end position="30"/>
    </location>
</feature>
<feature type="topological domain" description="Extracellular" evidence="4">
    <location>
        <begin position="31"/>
        <end position="35"/>
    </location>
</feature>
<feature type="transmembrane region" description="Helical" evidence="1">
    <location>
        <begin position="36"/>
        <end position="53"/>
    </location>
</feature>
<feature type="topological domain" description="Cytoplasmic" evidence="4">
    <location>
        <begin position="54"/>
        <end position="69"/>
    </location>
</feature>
<feature type="intramembrane region" evidence="1">
    <location>
        <begin position="70"/>
        <end position="80"/>
    </location>
</feature>
<feature type="topological domain" description="Cytoplasmic" evidence="4">
    <location>
        <begin position="81"/>
        <end position="86"/>
    </location>
</feature>
<feature type="transmembrane region" description="Helical" evidence="1">
    <location>
        <begin position="87"/>
        <end position="104"/>
    </location>
</feature>
<feature type="topological domain" description="Extracellular" evidence="4">
    <location>
        <position position="105"/>
    </location>
</feature>
<feature type="transmembrane region" description="Helical" evidence="1">
    <location>
        <begin position="106"/>
        <end position="126"/>
    </location>
</feature>
<feature type="topological domain" description="Cytoplasmic" evidence="4">
    <location>
        <begin position="127"/>
        <end position="191"/>
    </location>
</feature>
<feature type="region of interest" description="Disordered" evidence="3">
    <location>
        <begin position="134"/>
        <end position="191"/>
    </location>
</feature>
<feature type="modified residue" description="Phosphothreonine" evidence="1">
    <location>
        <position position="147"/>
    </location>
</feature>
<feature type="modified residue" description="Phosphoserine" evidence="2">
    <location>
        <position position="168"/>
    </location>
</feature>
<feature type="cross-link" description="Glycyl lysine isopeptide (Lys-Gly) (interchain with G-Cter in ubiquitin)" evidence="2">
    <location>
        <position position="149"/>
    </location>
</feature>
<protein>
    <recommendedName>
        <fullName evidence="1">Cytochrome b-245 light chain</fullName>
    </recommendedName>
    <alternativeName>
        <fullName>Cytochrome b(558) alpha chain</fullName>
    </alternativeName>
    <alternativeName>
        <fullName>Cytochrome b558 subunit alpha</fullName>
    </alternativeName>
    <alternativeName>
        <fullName>Neutrophil cytochrome b 22 kDa polypeptide</fullName>
    </alternativeName>
    <alternativeName>
        <fullName>Superoxide-generating NADPH oxidase light chain subunit</fullName>
    </alternativeName>
    <alternativeName>
        <fullName>p22 phagocyte B-cytochrome</fullName>
    </alternativeName>
    <alternativeName>
        <fullName>p22-phox</fullName>
        <shortName>p22phox</shortName>
    </alternativeName>
</protein>
<dbReference type="EMBL" id="AF411136">
    <property type="protein sequence ID" value="AAL11886.1"/>
    <property type="molecule type" value="mRNA"/>
</dbReference>
<dbReference type="SMR" id="Q95L73"/>
<dbReference type="GO" id="GO:0043020">
    <property type="term" value="C:NADPH oxidase complex"/>
    <property type="evidence" value="ECO:0000250"/>
    <property type="project" value="UniProtKB"/>
</dbReference>
<dbReference type="GO" id="GO:0005886">
    <property type="term" value="C:plasma membrane"/>
    <property type="evidence" value="ECO:0000250"/>
    <property type="project" value="UniProtKB"/>
</dbReference>
<dbReference type="GO" id="GO:0020037">
    <property type="term" value="F:heme binding"/>
    <property type="evidence" value="ECO:0007669"/>
    <property type="project" value="InterPro"/>
</dbReference>
<dbReference type="GO" id="GO:0046872">
    <property type="term" value="F:metal ion binding"/>
    <property type="evidence" value="ECO:0007669"/>
    <property type="project" value="UniProtKB-KW"/>
</dbReference>
<dbReference type="GO" id="GO:0016491">
    <property type="term" value="F:oxidoreductase activity"/>
    <property type="evidence" value="ECO:0007669"/>
    <property type="project" value="UniProtKB-KW"/>
</dbReference>
<dbReference type="GO" id="GO:0045087">
    <property type="term" value="P:innate immune response"/>
    <property type="evidence" value="ECO:0000250"/>
    <property type="project" value="UniProtKB"/>
</dbReference>
<dbReference type="InterPro" id="IPR007732">
    <property type="entry name" value="Cyt_b558_asu"/>
</dbReference>
<dbReference type="PANTHER" id="PTHR15168">
    <property type="entry name" value="CYTOCHROME B-245 LIGHT CHAIN"/>
    <property type="match status" value="1"/>
</dbReference>
<dbReference type="PANTHER" id="PTHR15168:SF0">
    <property type="entry name" value="CYTOCHROME B-245 LIGHT CHAIN"/>
    <property type="match status" value="1"/>
</dbReference>
<dbReference type="Pfam" id="PF05038">
    <property type="entry name" value="Cytochrom_B558a"/>
    <property type="match status" value="1"/>
</dbReference>
<dbReference type="PIRSF" id="PIRSF019635">
    <property type="entry name" value="Cytochr_b558a"/>
    <property type="match status" value="1"/>
</dbReference>
<comment type="function">
    <text evidence="1">Subunit of NADPH oxidase complexes that is required for the NADPH oxidase activity that generates, in various cell types, superoxide from molecular oxygen utilizing NADPH as an electron donor. Subunit of the phagocyte NADPH oxidase complex that mediates the transfer of electrons from cytosolic NADPH to O2 to produce the superoxide anion (O2(-)). In the activated complex, electrons are first transferred from NADPH to flavin adenine dinucleotide (FAD) and subsequently transferred via two heme molecules to molecular oxygen, producing superoxide through an outer-sphere reaction. Activation of the NADPH oxidase complex is initiated by the assembly of cytosolic subunits of the NADPH oxidase complex with the core NADPH oxidase complex to form a complex at the plasma membrane or phagosomal membrane. This activation process is initiated by phosphorylation dependent binding of the cytosolic NCF1/p47-phox subunit to the C-terminus of CYBA/p22-phox. Aassociates with NOX3 to form a functional NADPH oxidase constitutively generating superoxide.</text>
</comment>
<comment type="subunit">
    <text evidence="1 2">Component of the phagocyte NADPH oxidase core complex/cytochrome b558 complex, composed of CYBB (heavy chain (beta)) and CYBA (light chain (alpha)). Component of the phagocyte NADPH oxidase complex composed of an obligatory core heterodimer formed by the membrane proteins CYBA and CYBB and the cytosolic regulatory subunits NCF1/p47-phox, NCF2/p67-phox, NCF4/p40-phox and the small GTPase RAC1 or RAC2. Interacts with NCF1 (via SH3 domain) (By similarity). Interacts with SH3PXD2A (By similarity). Interacts with DUOX1, DUOX2 and TPO. Interacts with NOX4; this interaction mediates superoxide generation. Interacts with calprotectin (S100A8/9) (By similarity). Interacts with GBP7 (By similarity). Interacts with NOXO1. Forms a heterodimer with NOX3 and is essential for activity and cell membrane localization of NOX3. Interacts with NOX1 (By similarity).</text>
</comment>
<comment type="subcellular location">
    <subcellularLocation>
        <location evidence="1">Cell membrane</location>
        <topology evidence="1">Multi-pass membrane protein</topology>
    </subcellularLocation>
</comment>
<comment type="PTM">
    <text evidence="1">Phosphorylation at Thr-147 enhances NADPH oxidase activity by promoting NCF1/p47-phox binding.</text>
</comment>
<comment type="PTM">
    <text evidence="2">Ubiquitinated at Lys-149 likely by RNF145.</text>
</comment>
<comment type="similarity">
    <text evidence="4">Belongs to the p22phox family.</text>
</comment>